<evidence type="ECO:0000250" key="1">
    <source>
        <dbReference type="UniProtKB" id="O35664"/>
    </source>
</evidence>
<evidence type="ECO:0000255" key="2"/>
<evidence type="ECO:0000256" key="3">
    <source>
        <dbReference type="SAM" id="MobiDB-lite"/>
    </source>
</evidence>
<evidence type="ECO:0000269" key="4">
    <source>
    </source>
</evidence>
<evidence type="ECO:0000269" key="5">
    <source>
    </source>
</evidence>
<evidence type="ECO:0000269" key="6">
    <source>
    </source>
</evidence>
<evidence type="ECO:0000269" key="7">
    <source>
    </source>
</evidence>
<evidence type="ECO:0000269" key="8">
    <source>
    </source>
</evidence>
<evidence type="ECO:0000269" key="9">
    <source>
    </source>
</evidence>
<evidence type="ECO:0000269" key="10">
    <source>
    </source>
</evidence>
<evidence type="ECO:0000269" key="11">
    <source>
    </source>
</evidence>
<evidence type="ECO:0000269" key="12">
    <source>
    </source>
</evidence>
<evidence type="ECO:0000269" key="13">
    <source>
    </source>
</evidence>
<evidence type="ECO:0000269" key="14">
    <source>
    </source>
</evidence>
<evidence type="ECO:0000269" key="15">
    <source>
    </source>
</evidence>
<evidence type="ECO:0000269" key="16">
    <source>
    </source>
</evidence>
<evidence type="ECO:0000269" key="17">
    <source>
    </source>
</evidence>
<evidence type="ECO:0000269" key="18">
    <source>
    </source>
</evidence>
<evidence type="ECO:0000269" key="19">
    <source>
    </source>
</evidence>
<evidence type="ECO:0000269" key="20">
    <source>
    </source>
</evidence>
<evidence type="ECO:0000269" key="21">
    <source>
    </source>
</evidence>
<evidence type="ECO:0000269" key="22">
    <source>
    </source>
</evidence>
<evidence type="ECO:0000269" key="23">
    <source>
    </source>
</evidence>
<evidence type="ECO:0000269" key="24">
    <source>
    </source>
</evidence>
<evidence type="ECO:0000269" key="25">
    <source ref="5"/>
</evidence>
<evidence type="ECO:0000269" key="26">
    <source ref="6"/>
</evidence>
<evidence type="ECO:0000303" key="27">
    <source>
    </source>
</evidence>
<evidence type="ECO:0000303" key="28">
    <source>
    </source>
</evidence>
<evidence type="ECO:0000303" key="29">
    <source>
    </source>
</evidence>
<evidence type="ECO:0000303" key="30">
    <source>
    </source>
</evidence>
<evidence type="ECO:0000303" key="31">
    <source ref="8"/>
</evidence>
<evidence type="ECO:0000305" key="32"/>
<evidence type="ECO:0007744" key="33">
    <source>
        <dbReference type="PDB" id="1N6U"/>
    </source>
</evidence>
<evidence type="ECO:0007744" key="34">
    <source>
        <dbReference type="PDB" id="1N6V"/>
    </source>
</evidence>
<evidence type="ECO:0007744" key="35">
    <source>
        <dbReference type="PDB" id="2HYM"/>
    </source>
</evidence>
<evidence type="ECO:0007744" key="36">
    <source>
        <dbReference type="PDB" id="2KZ1"/>
    </source>
</evidence>
<evidence type="ECO:0007744" key="37">
    <source>
        <dbReference type="PDB" id="2LAG"/>
    </source>
</evidence>
<evidence type="ECO:0007744" key="38">
    <source>
        <dbReference type="PDB" id="3S8W"/>
    </source>
</evidence>
<evidence type="ECO:0007744" key="39">
    <source>
        <dbReference type="PDB" id="3S9D"/>
    </source>
</evidence>
<evidence type="ECO:0007744" key="40">
    <source>
        <dbReference type="PDB" id="3SE3"/>
    </source>
</evidence>
<evidence type="ECO:0007744" key="41">
    <source>
        <dbReference type="PDB" id="3SE4"/>
    </source>
</evidence>
<evidence type="ECO:0007744" key="42">
    <source>
    </source>
</evidence>
<evidence type="ECO:0007829" key="43">
    <source>
        <dbReference type="PDB" id="1N6U"/>
    </source>
</evidence>
<evidence type="ECO:0007829" key="44">
    <source>
        <dbReference type="PDB" id="3S8W"/>
    </source>
</evidence>
<evidence type="ECO:0007829" key="45">
    <source>
        <dbReference type="PDB" id="3S9D"/>
    </source>
</evidence>
<feature type="signal peptide">
    <location>
        <begin position="1"/>
        <end position="26"/>
    </location>
</feature>
<feature type="chain" id="PRO_0000011006" description="Interferon alpha/beta receptor 2">
    <location>
        <begin position="27"/>
        <end position="515"/>
    </location>
</feature>
<feature type="topological domain" description="Extracellular" evidence="2">
    <location>
        <begin position="27"/>
        <end position="243"/>
    </location>
</feature>
<feature type="transmembrane region" description="Helical" evidence="2">
    <location>
        <begin position="244"/>
        <end position="264"/>
    </location>
</feature>
<feature type="topological domain" description="Cytoplasmic" evidence="2">
    <location>
        <begin position="265"/>
        <end position="515"/>
    </location>
</feature>
<feature type="region of interest" description="Disordered" evidence="3">
    <location>
        <begin position="318"/>
        <end position="418"/>
    </location>
</feature>
<feature type="region of interest" description="Mediates interaction with STAT2 (and required for the recruitment of USP18)" evidence="16">
    <location>
        <begin position="418"/>
        <end position="444"/>
    </location>
</feature>
<feature type="region of interest" description="Disordered" evidence="3">
    <location>
        <begin position="455"/>
        <end position="515"/>
    </location>
</feature>
<feature type="compositionally biased region" description="Acidic residues" evidence="3">
    <location>
        <begin position="362"/>
        <end position="375"/>
    </location>
</feature>
<feature type="compositionally biased region" description="Polar residues" evidence="3">
    <location>
        <begin position="464"/>
        <end position="488"/>
    </location>
</feature>
<feature type="modified residue" description="Phosphotyrosine" evidence="6 7">
    <location>
        <position position="337"/>
    </location>
</feature>
<feature type="modified residue" description="Phosphoserine" evidence="42">
    <location>
        <position position="400"/>
    </location>
</feature>
<feature type="modified residue" description="Phosphoserine" evidence="1">
    <location>
        <position position="467"/>
    </location>
</feature>
<feature type="modified residue" description="Phosphotyrosine" evidence="6 7">
    <location>
        <position position="512"/>
    </location>
</feature>
<feature type="glycosylation site" description="N-linked (GlcNAc...) asparagine" evidence="2">
    <location>
        <position position="58"/>
    </location>
</feature>
<feature type="glycosylation site" description="N-linked (GlcNAc...) asparagine" evidence="21">
    <location>
        <position position="87"/>
    </location>
</feature>
<feature type="glycosylation site" description="N-linked (GlcNAc...) asparagine" evidence="2">
    <location>
        <position position="116"/>
    </location>
</feature>
<feature type="glycosylation site" description="N-linked (GlcNAc...) asparagine" evidence="2">
    <location>
        <position position="188"/>
    </location>
</feature>
<feature type="glycosylation site" description="N-linked (GlcNAc...) asparagine" evidence="21">
    <location>
        <position position="192"/>
    </location>
</feature>
<feature type="disulfide bond" evidence="9 11 12 13 33 34 35 36 37 39 40 41">
    <location>
        <begin position="39"/>
        <end position="122"/>
    </location>
</feature>
<feature type="disulfide bond" evidence="9 11 12 13 33 34 35 36 37 39 40 41">
    <location>
        <begin position="85"/>
        <end position="93"/>
    </location>
</feature>
<feature type="disulfide bond" evidence="9 11 12 13 33 34 35 36 37 38 39 40 41">
    <location>
        <begin position="207"/>
        <end position="227"/>
    </location>
</feature>
<feature type="splice variant" id="VSP_001736" description="In isoform 3." evidence="27 29">
    <original>SA</original>
    <variation>FS</variation>
    <location>
        <begin position="238"/>
        <end position="239"/>
    </location>
</feature>
<feature type="splice variant" id="VSP_001737" description="In isoform 3." evidence="27 29">
    <location>
        <begin position="240"/>
        <end position="515"/>
    </location>
</feature>
<feature type="splice variant" id="VSP_001738" description="In isoform 2." evidence="27 30 31">
    <original>NFHNFLAWPFPNLPPLEAMDMVEVIYINRKKKVWDYNYDDESDSDTEAAPR</original>
    <variation>RQGLAKGWNAVAIHRCSHNALQSETPELKQSSCLSFPSSWDYKRASLCPSD</variation>
    <location>
        <begin position="281"/>
        <end position="331"/>
    </location>
</feature>
<feature type="splice variant" id="VSP_001739" description="In isoform 2." evidence="27 30 31">
    <location>
        <begin position="332"/>
        <end position="515"/>
    </location>
</feature>
<feature type="sequence variant" id="VAR_020521" description="Risk factor for HVB infection; lower cell surface levels; lower induction of MHC class 1 expression by INF-alpha; dbSNP:rs2229207." evidence="8 26">
    <original>F</original>
    <variation>S</variation>
    <location>
        <position position="8"/>
    </location>
</feature>
<feature type="sequence variant" id="VAR_020522" description="In dbSNP:rs1051393." evidence="8 20 21 25 26">
    <original>F</original>
    <variation>V</variation>
    <location>
        <position position="10"/>
    </location>
</feature>
<feature type="sequence variant" id="VAR_084099" description="No effect on activation of STAT1 upon IFNA2 or IFNG binding; dbSNP:rs201003373." evidence="17">
    <original>E</original>
    <variation>Q</variation>
    <location>
        <position position="37"/>
    </location>
</feature>
<feature type="sequence variant" id="VAR_084100" description="No effect on activation of STAT1 upon IFNA2 or IFNG binding; dbSNP:rs142850110." evidence="17">
    <original>M</original>
    <variation>V</variation>
    <location>
        <position position="73"/>
    </location>
</feature>
<feature type="sequence variant" id="VAR_084101" description="No effect on activation of STAT1 upon IFNA2 or IFNG binding." evidence="17">
    <original>E</original>
    <variation>V</variation>
    <location>
        <position position="138"/>
    </location>
</feature>
<feature type="sequence variant" id="VAR_020523" description="In dbSNP:rs17860223." evidence="26">
    <original>I</original>
    <variation>V</variation>
    <location>
        <position position="196"/>
    </location>
</feature>
<feature type="sequence variant" id="VAR_084102" description="No effect on activation of STAT1 upon IFNA2 or IFNG binding; dbSNP:rs747605798." evidence="17">
    <original>S</original>
    <variation>G</variation>
    <location>
        <position position="215"/>
    </location>
</feature>
<feature type="sequence variant" id="VAR_084103" description="No effect on activation of STAT1 upon IFNA2 or IFNG binding; dbSNP:rs763508005." evidence="17">
    <original>H</original>
    <variation>R</variation>
    <location>
        <position position="283"/>
    </location>
</feature>
<feature type="sequence variant" id="VAR_084104" description="No effect on activation of STAT1 upon IFNA2 or IFNG binding; dbSNP:rs759744926." evidence="17">
    <original>P</original>
    <variation>L</variation>
    <location>
        <position position="295"/>
    </location>
</feature>
<feature type="sequence variant" id="VAR_084105" description="No effect on activation of STAT1 upon IFNA2 or IFNG binding; dbSNP:rs756571542." evidence="17">
    <original>Y</original>
    <variation>C</variation>
    <location>
        <position position="318"/>
    </location>
</feature>
<feature type="sequence variant" id="VAR_084106" description="No effect on activation of STAT1 upon IFNA2 or IFNG binding; dbSNP:rs201411274." evidence="17">
    <original>S</original>
    <variation>N</variation>
    <location>
        <position position="324"/>
    </location>
</feature>
<feature type="sequence variant" id="VAR_084107" description="No effect on activation of STAT1 upon IFNA2 or IFNG binding; dbSNP:rs148519830." evidence="17">
    <original>P</original>
    <variation>S</variation>
    <location>
        <position position="346"/>
    </location>
</feature>
<feature type="sequence variant" id="VAR_084108" description="No effect on activation of STAT1 upon IFNA2 or IFNG binding; dbSNP:rs1441207963." evidence="17">
    <original>P</original>
    <variation>S</variation>
    <location>
        <position position="362"/>
    </location>
</feature>
<feature type="sequence variant" id="VAR_084109" description="No effect on activation of STAT1 upon IFNA2 or IFNG binding; dbSNP:rs1231284605." evidence="17">
    <original>P</original>
    <variation>L</variation>
    <location>
        <position position="385"/>
    </location>
</feature>
<feature type="sequence variant" id="VAR_084110" description="No effect on activation of STAT1 upon IFNA2 or IFNG binding; dbSNP:rs866733383." evidence="17">
    <original>S</original>
    <variation>L</variation>
    <location>
        <position position="450"/>
    </location>
</feature>
<feature type="mutagenesis site" description="Does not inhibit STAT1, STAT2 and STAT3 activation by IFN. Inhibits STAT1, STAT2 and STAT3 activation by IFN; when associated with F-306; F-316; F-318; F-337; F-411 and F-512. Inhibits STAT1, STAT2 and STAT3 activation by IFN; when associated with F-306; F-316; F-318; F-411 and F-512. Does not inhibit STAT1, STAT2 and STAT3 activation by IFN; when associated with F-306; F-316; F-318 and F-337." evidence="6 7">
    <original>Y</original>
    <variation>F</variation>
    <location>
        <position position="269"/>
    </location>
</feature>
<feature type="mutagenesis site" description="Does not inhibit STAT1, STAT2 and STAT3 activation by IFN. Inhibits STAT1, STAT2 and STAT3 activation by IFN; when associated with F-269; F-316; F-318; F-337; F-411 and F-512. Inhibits STAT1, STAT2 and STAT3 activation by IFN; when associated with F-269; F-316; F-318; F-411 and F-512. Does not inhibit STAT1, STAT2 and STAT3 activation by IFN; when associated with F-512. Does not inhibit STAT1, STAT2 and STAT3 activation by IFN; when associated with F-269; F-316; F-318 and F-337." evidence="6 7">
    <original>Y</original>
    <variation>F</variation>
    <location>
        <position position="306"/>
    </location>
</feature>
<feature type="mutagenesis site" description="Does not inhibit STAT1, STAT2 and STAT3 activation by IFN. Inhibits STAT1, STAT2 and STAT3 activation by IFN; when associated with F-269; F-306; F-318; F-337; F-411 and F-512. Inhibits STAT1, STAT2 and STAT3 activation by IFN; when associated with F-269; F-306; F-318; F-411 and F-512. Does not inhibit STAT1, STAT2 and STAT3 activation by IFN; when associated with F-512. Does not inhibit STAT1, STAT2 and STAT3 activation by IFN; when associated with F-269; F-306; F-318 and F-337." evidence="6 7">
    <original>Y</original>
    <variation>F</variation>
    <location>
        <position position="316"/>
    </location>
</feature>
<feature type="mutagenesis site" description="Does not inhibit STAT1, STAT2 and STAT3 activation by IFN. Inhibits STAT1, STAT2 and STAT3 activation by IFN; when associated with F-269; F-306; F-316; F-337; F-411 and F-512. Inhibits STAT1, STAT2 and STAT3 activation by IFN; when associated with F-269; F-306; F-316; F-411 and F-512. Does not inhibit STAT1, STAT2 and STAT3 activation by IFN; when associated with F-512. Does not inhibit STAT1, STAT2 and STAT3 activation by IFN; when associated with F-269; F-306; F-316 and F-337." evidence="6 7">
    <original>Y</original>
    <variation>F</variation>
    <location>
        <position position="318"/>
    </location>
</feature>
<feature type="mutagenesis site" description="Does not inhibit STAT1, STAT2 and STAT3 activation by IFN. Inhibits STAT1, STAT2 and STAT3 activation by IFN; when associated with F-269; F-306; F-316; F-318; F-411 and F-512. Does not inhibit STAT1, STAT2 and STAT3 activation by IFN; when associated with F-512. Does not inhibit STAT1, STAT2 and STAT3 activation by IFN; when associated with F-269; F-306; F-316 and F-318." evidence="6 7">
    <original>Y</original>
    <variation>F</variation>
    <location>
        <position position="337"/>
    </location>
</feature>
<feature type="mutagenesis site" description="Does not inhibit STAT1, STAT2 and STAT3 activation by IFN. Inhibits STAT1, STAT2 and STAT3 activation by IFN; when associated with F-269; F-306; F-316; F-318; F-337 and F-512. Inhibits STAT1, STAT2 and STAT3 activation by IFN; when associated with F-269; F-306; F-316; F-318 and F-512. Does not inhibit STAT1, STAT2 and STAT3 activation by IFN; when associated with F-512." evidence="6 7">
    <original>Y</original>
    <variation>F</variation>
    <location>
        <position position="411"/>
    </location>
</feature>
<feature type="mutagenesis site" description="Does not inhibit STAT1, STAT2 and STAT3 activation by IFN. Inhibits STAT1, STAT2 and STAT3 activation by IFN; when associated with F-269; F-306; F-316; F-318; F-337 and F-411. Inhibits STAT1, STAT2 and STAT3 activation by IFN; when associated with F-269; F-306; F-316; F-318 and F-411. Does not inhibit STAT1, STAT2 and STAT3 activation by IFN; when associated with F-411." evidence="6 7">
    <original>Y</original>
    <variation>F</variation>
    <location>
        <position position="512"/>
    </location>
</feature>
<feature type="sequence conflict" description="In Ref. 3; AAC50202." evidence="32" ref="3">
    <original>M</original>
    <variation>V</variation>
    <location>
        <position position="151"/>
    </location>
</feature>
<feature type="strand" evidence="45">
    <location>
        <begin position="40"/>
        <end position="46"/>
    </location>
</feature>
<feature type="strand" evidence="45">
    <location>
        <begin position="49"/>
        <end position="55"/>
    </location>
</feature>
<feature type="strand" evidence="43">
    <location>
        <begin position="59"/>
        <end position="61"/>
    </location>
</feature>
<feature type="strand" evidence="45">
    <location>
        <begin position="65"/>
        <end position="75"/>
    </location>
</feature>
<feature type="helix" evidence="45">
    <location>
        <begin position="83"/>
        <end position="85"/>
    </location>
</feature>
<feature type="strand" evidence="45">
    <location>
        <begin position="86"/>
        <end position="89"/>
    </location>
</feature>
<feature type="strand" evidence="45">
    <location>
        <begin position="91"/>
        <end position="94"/>
    </location>
</feature>
<feature type="turn" evidence="45">
    <location>
        <begin position="96"/>
        <end position="98"/>
    </location>
</feature>
<feature type="strand" evidence="45">
    <location>
        <begin position="102"/>
        <end position="104"/>
    </location>
</feature>
<feature type="strand" evidence="45">
    <location>
        <begin position="106"/>
        <end position="113"/>
    </location>
</feature>
<feature type="strand" evidence="45">
    <location>
        <begin position="119"/>
        <end position="126"/>
    </location>
</feature>
<feature type="helix" evidence="45">
    <location>
        <begin position="128"/>
        <end position="131"/>
    </location>
</feature>
<feature type="strand" evidence="45">
    <location>
        <begin position="138"/>
        <end position="143"/>
    </location>
</feature>
<feature type="strand" evidence="45">
    <location>
        <begin position="148"/>
        <end position="153"/>
    </location>
</feature>
<feature type="helix" evidence="43">
    <location>
        <begin position="159"/>
        <end position="161"/>
    </location>
</feature>
<feature type="strand" evidence="45">
    <location>
        <begin position="167"/>
        <end position="174"/>
    </location>
</feature>
<feature type="strand" evidence="45">
    <location>
        <begin position="177"/>
        <end position="181"/>
    </location>
</feature>
<feature type="strand" evidence="44">
    <location>
        <begin position="186"/>
        <end position="188"/>
    </location>
</feature>
<feature type="strand" evidence="45">
    <location>
        <begin position="191"/>
        <end position="197"/>
    </location>
</feature>
<feature type="strand" evidence="45">
    <location>
        <begin position="205"/>
        <end position="213"/>
    </location>
</feature>
<feature type="strand" evidence="45">
    <location>
        <begin position="226"/>
        <end position="229"/>
    </location>
</feature>
<accession>P48551</accession>
<accession>A8KAJ4</accession>
<accession>D3DSE8</accession>
<accession>D3DSE9</accession>
<accession>Q15467</accession>
<accession>Q6FHD7</accession>
<dbReference type="EMBL" id="X77722">
    <property type="protein sequence ID" value="CAA54785.1"/>
    <property type="molecule type" value="mRNA"/>
</dbReference>
<dbReference type="EMBL" id="L42243">
    <property type="protein sequence ID" value="AAB46417.1"/>
    <property type="molecule type" value="Genomic_DNA"/>
</dbReference>
<dbReference type="EMBL" id="L42238">
    <property type="protein sequence ID" value="AAB46417.1"/>
    <property type="status" value="JOINED"/>
    <property type="molecule type" value="Genomic_DNA"/>
</dbReference>
<dbReference type="EMBL" id="L42239">
    <property type="protein sequence ID" value="AAB46417.1"/>
    <property type="status" value="JOINED"/>
    <property type="molecule type" value="Genomic_DNA"/>
</dbReference>
<dbReference type="EMBL" id="L42240">
    <property type="protein sequence ID" value="AAB46417.1"/>
    <property type="status" value="JOINED"/>
    <property type="molecule type" value="Genomic_DNA"/>
</dbReference>
<dbReference type="EMBL" id="L42323">
    <property type="protein sequence ID" value="AAB46417.1"/>
    <property type="status" value="JOINED"/>
    <property type="molecule type" value="Genomic_DNA"/>
</dbReference>
<dbReference type="EMBL" id="L42241">
    <property type="protein sequence ID" value="AAB46417.1"/>
    <property type="status" value="JOINED"/>
    <property type="molecule type" value="Genomic_DNA"/>
</dbReference>
<dbReference type="EMBL" id="L42242">
    <property type="protein sequence ID" value="AAB46417.1"/>
    <property type="status" value="JOINED"/>
    <property type="molecule type" value="Genomic_DNA"/>
</dbReference>
<dbReference type="EMBL" id="L42243">
    <property type="protein sequence ID" value="AAB46418.1"/>
    <property type="molecule type" value="Genomic_DNA"/>
</dbReference>
<dbReference type="EMBL" id="L42238">
    <property type="protein sequence ID" value="AAB46418.1"/>
    <property type="status" value="JOINED"/>
    <property type="molecule type" value="Genomic_DNA"/>
</dbReference>
<dbReference type="EMBL" id="L42239">
    <property type="protein sequence ID" value="AAB46418.1"/>
    <property type="status" value="JOINED"/>
    <property type="molecule type" value="Genomic_DNA"/>
</dbReference>
<dbReference type="EMBL" id="L42240">
    <property type="protein sequence ID" value="AAB46418.1"/>
    <property type="status" value="JOINED"/>
    <property type="molecule type" value="Genomic_DNA"/>
</dbReference>
<dbReference type="EMBL" id="L42323">
    <property type="protein sequence ID" value="AAB46418.1"/>
    <property type="status" value="JOINED"/>
    <property type="molecule type" value="Genomic_DNA"/>
</dbReference>
<dbReference type="EMBL" id="L42241">
    <property type="protein sequence ID" value="AAB46418.1"/>
    <property type="status" value="JOINED"/>
    <property type="molecule type" value="Genomic_DNA"/>
</dbReference>
<dbReference type="EMBL" id="L42243">
    <property type="protein sequence ID" value="AAB46419.1"/>
    <property type="molecule type" value="Genomic_DNA"/>
</dbReference>
<dbReference type="EMBL" id="L42238">
    <property type="protein sequence ID" value="AAB46419.1"/>
    <property type="status" value="JOINED"/>
    <property type="molecule type" value="Genomic_DNA"/>
</dbReference>
<dbReference type="EMBL" id="L42239">
    <property type="protein sequence ID" value="AAB46419.1"/>
    <property type="status" value="JOINED"/>
    <property type="molecule type" value="Genomic_DNA"/>
</dbReference>
<dbReference type="EMBL" id="L42240">
    <property type="protein sequence ID" value="AAB46419.1"/>
    <property type="status" value="JOINED"/>
    <property type="molecule type" value="Genomic_DNA"/>
</dbReference>
<dbReference type="EMBL" id="L42323">
    <property type="protein sequence ID" value="AAB46419.1"/>
    <property type="status" value="JOINED"/>
    <property type="molecule type" value="Genomic_DNA"/>
</dbReference>
<dbReference type="EMBL" id="L42241">
    <property type="protein sequence ID" value="AAB46419.1"/>
    <property type="status" value="JOINED"/>
    <property type="molecule type" value="Genomic_DNA"/>
</dbReference>
<dbReference type="EMBL" id="L42242">
    <property type="protein sequence ID" value="AAB46419.1"/>
    <property type="status" value="JOINED"/>
    <property type="molecule type" value="Genomic_DNA"/>
</dbReference>
<dbReference type="EMBL" id="L41942">
    <property type="protein sequence ID" value="AAB46413.1"/>
    <property type="molecule type" value="mRNA"/>
</dbReference>
<dbReference type="EMBL" id="L41943">
    <property type="protein sequence ID" value="AAB46414.1"/>
    <property type="molecule type" value="mRNA"/>
</dbReference>
<dbReference type="EMBL" id="L41944">
    <property type="protein sequence ID" value="AAB46415.1"/>
    <property type="molecule type" value="mRNA"/>
</dbReference>
<dbReference type="EMBL" id="U29584">
    <property type="protein sequence ID" value="AAC50202.1"/>
    <property type="molecule type" value="mRNA"/>
</dbReference>
<dbReference type="EMBL" id="X89814">
    <property type="protein sequence ID" value="CAA61940.1"/>
    <property type="molecule type" value="mRNA"/>
</dbReference>
<dbReference type="EMBL" id="X89772">
    <property type="protein sequence ID" value="CAA61914.1"/>
    <property type="molecule type" value="mRNA"/>
</dbReference>
<dbReference type="EMBL" id="AY740397">
    <property type="protein sequence ID" value="AAU21038.1"/>
    <property type="molecule type" value="Genomic_DNA"/>
</dbReference>
<dbReference type="EMBL" id="AK293059">
    <property type="protein sequence ID" value="BAF85748.1"/>
    <property type="molecule type" value="mRNA"/>
</dbReference>
<dbReference type="EMBL" id="CR541817">
    <property type="protein sequence ID" value="CAG46616.1"/>
    <property type="molecule type" value="mRNA"/>
</dbReference>
<dbReference type="EMBL" id="AP000292">
    <property type="status" value="NOT_ANNOTATED_CDS"/>
    <property type="molecule type" value="Genomic_DNA"/>
</dbReference>
<dbReference type="EMBL" id="AP000293">
    <property type="status" value="NOT_ANNOTATED_CDS"/>
    <property type="molecule type" value="Genomic_DNA"/>
</dbReference>
<dbReference type="EMBL" id="AP000294">
    <property type="status" value="NOT_ANNOTATED_CDS"/>
    <property type="molecule type" value="Genomic_DNA"/>
</dbReference>
<dbReference type="EMBL" id="AP000295">
    <property type="status" value="NOT_ANNOTATED_CDS"/>
    <property type="molecule type" value="Genomic_DNA"/>
</dbReference>
<dbReference type="EMBL" id="CH471079">
    <property type="protein sequence ID" value="EAX09842.1"/>
    <property type="molecule type" value="Genomic_DNA"/>
</dbReference>
<dbReference type="EMBL" id="CH471079">
    <property type="protein sequence ID" value="EAX09843.1"/>
    <property type="molecule type" value="Genomic_DNA"/>
</dbReference>
<dbReference type="EMBL" id="CH471079">
    <property type="protein sequence ID" value="EAX09844.1"/>
    <property type="molecule type" value="Genomic_DNA"/>
</dbReference>
<dbReference type="EMBL" id="CH471079">
    <property type="protein sequence ID" value="EAX09846.1"/>
    <property type="molecule type" value="Genomic_DNA"/>
</dbReference>
<dbReference type="CCDS" id="CCDS13621.1">
    <molecule id="P48551-1"/>
</dbReference>
<dbReference type="CCDS" id="CCDS13622.1">
    <molecule id="P48551-2"/>
</dbReference>
<dbReference type="CCDS" id="CCDS74782.1">
    <molecule id="P48551-3"/>
</dbReference>
<dbReference type="PIR" id="I39073">
    <property type="entry name" value="I39073"/>
</dbReference>
<dbReference type="PIR" id="S59501">
    <property type="entry name" value="S59501"/>
</dbReference>
<dbReference type="RefSeq" id="NP_000865.2">
    <molecule id="P48551-2"/>
    <property type="nucleotide sequence ID" value="NM_000874.4"/>
</dbReference>
<dbReference type="RefSeq" id="NP_001276054.1">
    <molecule id="P48551-1"/>
    <property type="nucleotide sequence ID" value="NM_001289125.3"/>
</dbReference>
<dbReference type="RefSeq" id="NP_001276055.1">
    <molecule id="P48551-3"/>
    <property type="nucleotide sequence ID" value="NM_001289126.2"/>
</dbReference>
<dbReference type="RefSeq" id="NP_001276057.1">
    <molecule id="P48551-3"/>
    <property type="nucleotide sequence ID" value="NM_001289128.2"/>
</dbReference>
<dbReference type="RefSeq" id="NP_997467.1">
    <molecule id="P48551-2"/>
    <property type="nucleotide sequence ID" value="NM_207584.3"/>
</dbReference>
<dbReference type="RefSeq" id="NP_997468.1">
    <molecule id="P48551-1"/>
    <property type="nucleotide sequence ID" value="NM_207585.3"/>
</dbReference>
<dbReference type="PDB" id="1N6U">
    <property type="method" value="NMR"/>
    <property type="chains" value="A=28-237"/>
</dbReference>
<dbReference type="PDB" id="1N6V">
    <property type="method" value="NMR"/>
    <property type="chains" value="A=28-237"/>
</dbReference>
<dbReference type="PDB" id="2HYM">
    <property type="method" value="NMR"/>
    <property type="chains" value="A=28-237"/>
</dbReference>
<dbReference type="PDB" id="2KZ1">
    <property type="method" value="NMR"/>
    <property type="chains" value="B=28-237"/>
</dbReference>
<dbReference type="PDB" id="2LAG">
    <property type="method" value="NMR"/>
    <property type="chains" value="B=28-237"/>
</dbReference>
<dbReference type="PDB" id="3S8W">
    <property type="method" value="X-ray"/>
    <property type="resolution" value="2.60 A"/>
    <property type="chains" value="A/B/C=131-232"/>
</dbReference>
<dbReference type="PDB" id="3S9D">
    <property type="method" value="X-ray"/>
    <property type="resolution" value="2.00 A"/>
    <property type="chains" value="B/D=37-232"/>
</dbReference>
<dbReference type="PDB" id="3SE3">
    <property type="method" value="X-ray"/>
    <property type="resolution" value="4.00 A"/>
    <property type="chains" value="C=34-232"/>
</dbReference>
<dbReference type="PDB" id="3SE4">
    <property type="method" value="X-ray"/>
    <property type="resolution" value="3.50 A"/>
    <property type="chains" value="C=34-232"/>
</dbReference>
<dbReference type="PDBsum" id="1N6U"/>
<dbReference type="PDBsum" id="1N6V"/>
<dbReference type="PDBsum" id="2HYM"/>
<dbReference type="PDBsum" id="2KZ1"/>
<dbReference type="PDBsum" id="2LAG"/>
<dbReference type="PDBsum" id="3S8W"/>
<dbReference type="PDBsum" id="3S9D"/>
<dbReference type="PDBsum" id="3SE3"/>
<dbReference type="PDBsum" id="3SE4"/>
<dbReference type="BMRB" id="P48551"/>
<dbReference type="SMR" id="P48551"/>
<dbReference type="BioGRID" id="109677">
    <property type="interactions" value="30"/>
</dbReference>
<dbReference type="ComplexPortal" id="CPX-5995">
    <property type="entry name" value="Interferon alpha receptor-ligand complex, IFNA2 variant"/>
</dbReference>
<dbReference type="ComplexPortal" id="CPX-5996">
    <property type="entry name" value="Interferon alpha receptor-ligand complex, IFNA1 variant"/>
</dbReference>
<dbReference type="ComplexPortal" id="CPX-5997">
    <property type="entry name" value="Interferon alpha receptor-ligand complex, IFNA7 variant"/>
</dbReference>
<dbReference type="ComplexPortal" id="CPX-5998">
    <property type="entry name" value="Interferon alpha receptor-ligand complex, IFNA4 variant"/>
</dbReference>
<dbReference type="ComplexPortal" id="CPX-5999">
    <property type="entry name" value="Interferon alpha receptor-ligand complex, IFNA5 variant"/>
</dbReference>
<dbReference type="ComplexPortal" id="CPX-6000">
    <property type="entry name" value="Interferon alpha receptor-ligand complex, IFNA6 variant"/>
</dbReference>
<dbReference type="ComplexPortal" id="CPX-6001">
    <property type="entry name" value="Interferon alpha receptor-ligand complex, IFNA8 variant"/>
</dbReference>
<dbReference type="ComplexPortal" id="CPX-6002">
    <property type="entry name" value="Interferon alpha receptor-ligand complex, IFNA10 variant"/>
</dbReference>
<dbReference type="ComplexPortal" id="CPX-6003">
    <property type="entry name" value="Interferon alpha receptor-ligand complex, IFNA14 variant"/>
</dbReference>
<dbReference type="ComplexPortal" id="CPX-6004">
    <property type="entry name" value="Interferon alpha receptor-ligand complex, IFNA16 variant"/>
</dbReference>
<dbReference type="ComplexPortal" id="CPX-6005">
    <property type="entry name" value="Interferon alpha receptor-ligand complex, IFNA17 variant"/>
</dbReference>
<dbReference type="ComplexPortal" id="CPX-6006">
    <property type="entry name" value="Interferon alpha receptor-ligand complex, IFNA21 variant"/>
</dbReference>
<dbReference type="ComplexPortal" id="CPX-6007">
    <property type="entry name" value="Interferon beta receptor-ligand complex"/>
</dbReference>
<dbReference type="ComplexPortal" id="CPX-6008">
    <property type="entry name" value="Interferon epsilon receptor-ligand complex"/>
</dbReference>
<dbReference type="ComplexPortal" id="CPX-6009">
    <property type="entry name" value="Interferon kappa receptor-ligand complex"/>
</dbReference>
<dbReference type="ComplexPortal" id="CPX-6010">
    <property type="entry name" value="Interferon omega receptor-ligand complex"/>
</dbReference>
<dbReference type="CORUM" id="P48551"/>
<dbReference type="DIP" id="DIP-945N"/>
<dbReference type="FunCoup" id="P48551">
    <property type="interactions" value="1338"/>
</dbReference>
<dbReference type="IntAct" id="P48551">
    <property type="interactions" value="17"/>
</dbReference>
<dbReference type="MINT" id="P48551"/>
<dbReference type="STRING" id="9606.ENSP00000343957"/>
<dbReference type="ChEMBL" id="CHEMBL2364170"/>
<dbReference type="DrugBank" id="DB05472">
    <property type="generic name" value="Human interferon omega-1"/>
</dbReference>
<dbReference type="DrugBank" id="DB00034">
    <property type="generic name" value="Interferon alfa-2a"/>
</dbReference>
<dbReference type="DrugBank" id="DB00105">
    <property type="generic name" value="Interferon alfa-2b"/>
</dbReference>
<dbReference type="DrugBank" id="DB00011">
    <property type="generic name" value="Interferon alfa-n1"/>
</dbReference>
<dbReference type="DrugBank" id="DB00018">
    <property type="generic name" value="Interferon alfa-n3"/>
</dbReference>
<dbReference type="DrugBank" id="DB00069">
    <property type="generic name" value="Interferon alfacon-1"/>
</dbReference>
<dbReference type="DrugBank" id="DB00060">
    <property type="generic name" value="Interferon beta-1a"/>
</dbReference>
<dbReference type="DrugBank" id="DB00068">
    <property type="generic name" value="Interferon beta-1b"/>
</dbReference>
<dbReference type="DrugBank" id="DB06152">
    <property type="generic name" value="Nylidrin"/>
</dbReference>
<dbReference type="DrugBank" id="DB00008">
    <property type="generic name" value="Peginterferon alfa-2a"/>
</dbReference>
<dbReference type="DrugBank" id="DB00022">
    <property type="generic name" value="Peginterferon alfa-2b"/>
</dbReference>
<dbReference type="DrugBank" id="DB15119">
    <property type="generic name" value="Ropeginterferon alfa-2b"/>
</dbReference>
<dbReference type="DrugCentral" id="P48551"/>
<dbReference type="GlyConnect" id="2051">
    <property type="glycosylation" value="4 N-Linked glycans (1 site)"/>
</dbReference>
<dbReference type="GlyCosmos" id="P48551">
    <property type="glycosylation" value="5 sites, 8 glycans"/>
</dbReference>
<dbReference type="GlyGen" id="P48551">
    <property type="glycosylation" value="7 sites, 9 N-linked glycans (1 site)"/>
</dbReference>
<dbReference type="iPTMnet" id="P48551"/>
<dbReference type="PhosphoSitePlus" id="P48551"/>
<dbReference type="BioMuta" id="IFNAR2"/>
<dbReference type="DMDM" id="1352466"/>
<dbReference type="jPOST" id="P48551"/>
<dbReference type="MassIVE" id="P48551"/>
<dbReference type="PaxDb" id="9606-ENSP00000343957"/>
<dbReference type="PeptideAtlas" id="P48551"/>
<dbReference type="ProteomicsDB" id="55905">
    <molecule id="P48551-1"/>
</dbReference>
<dbReference type="ProteomicsDB" id="55906">
    <molecule id="P48551-2"/>
</dbReference>
<dbReference type="ProteomicsDB" id="55907">
    <molecule id="P48551-3"/>
</dbReference>
<dbReference type="Antibodypedia" id="34938">
    <property type="antibodies" value="422 antibodies from 36 providers"/>
</dbReference>
<dbReference type="DNASU" id="3455"/>
<dbReference type="Ensembl" id="ENST00000342101.7">
    <molecule id="P48551-3"/>
    <property type="protein sequence ID" value="ENSP00000343289.3"/>
    <property type="gene ID" value="ENSG00000159110.22"/>
</dbReference>
<dbReference type="Ensembl" id="ENST00000342136.9">
    <molecule id="P48551-1"/>
    <property type="protein sequence ID" value="ENSP00000343957.5"/>
    <property type="gene ID" value="ENSG00000159110.22"/>
</dbReference>
<dbReference type="Ensembl" id="ENST00000382264.7">
    <molecule id="P48551-2"/>
    <property type="protein sequence ID" value="ENSP00000371699.3"/>
    <property type="gene ID" value="ENSG00000159110.22"/>
</dbReference>
<dbReference type="Ensembl" id="ENST00000404220.7">
    <molecule id="P48551-2"/>
    <property type="protein sequence ID" value="ENSP00000384309.2"/>
    <property type="gene ID" value="ENSG00000159110.22"/>
</dbReference>
<dbReference type="Ensembl" id="ENST00000683941.1">
    <molecule id="P48551-1"/>
    <property type="protein sequence ID" value="ENSP00000508013.1"/>
    <property type="gene ID" value="ENSG00000159110.22"/>
</dbReference>
<dbReference type="GeneID" id="3455"/>
<dbReference type="KEGG" id="hsa:3455"/>
<dbReference type="MANE-Select" id="ENST00000342136.9">
    <property type="protein sequence ID" value="ENSP00000343957.5"/>
    <property type="RefSeq nucleotide sequence ID" value="NM_001289125.3"/>
    <property type="RefSeq protein sequence ID" value="NP_001276054.1"/>
</dbReference>
<dbReference type="UCSC" id="uc002yrb.5">
    <molecule id="P48551-1"/>
    <property type="organism name" value="human"/>
</dbReference>
<dbReference type="AGR" id="HGNC:5433"/>
<dbReference type="CTD" id="3455"/>
<dbReference type="DisGeNET" id="3455"/>
<dbReference type="GeneCards" id="IFNAR2"/>
<dbReference type="HGNC" id="HGNC:5433">
    <property type="gene designation" value="IFNAR2"/>
</dbReference>
<dbReference type="HPA" id="ENSG00000159110">
    <property type="expression patterns" value="Low tissue specificity"/>
</dbReference>
<dbReference type="MalaCards" id="IFNAR2"/>
<dbReference type="MIM" id="602376">
    <property type="type" value="gene"/>
</dbReference>
<dbReference type="MIM" id="610424">
    <property type="type" value="phenotype"/>
</dbReference>
<dbReference type="MIM" id="616669">
    <property type="type" value="phenotype"/>
</dbReference>
<dbReference type="neXtProt" id="NX_P48551"/>
<dbReference type="OpenTargets" id="ENSG00000159110"/>
<dbReference type="Orphanet" id="431166">
    <property type="disease" value="Primary immunodeficiency with post-measles-mumps-rubella vaccine viral infection"/>
</dbReference>
<dbReference type="PharmGKB" id="PA29671"/>
<dbReference type="VEuPathDB" id="HostDB:ENSG00000159110"/>
<dbReference type="eggNOG" id="ENOG502S60E">
    <property type="taxonomic scope" value="Eukaryota"/>
</dbReference>
<dbReference type="GeneTree" id="ENSGT00510000049322"/>
<dbReference type="HOGENOM" id="CLU_072607_0_0_1"/>
<dbReference type="InParanoid" id="P48551"/>
<dbReference type="OMA" id="DWQCTHA"/>
<dbReference type="OrthoDB" id="8947665at2759"/>
<dbReference type="PAN-GO" id="P48551">
    <property type="GO annotations" value="3 GO annotations based on evolutionary models"/>
</dbReference>
<dbReference type="PhylomeDB" id="P48551"/>
<dbReference type="TreeFam" id="TF335897"/>
<dbReference type="PathwayCommons" id="P48551"/>
<dbReference type="Reactome" id="R-HSA-909733">
    <molecule id="P48551-2"/>
    <property type="pathway name" value="Interferon alpha/beta signaling"/>
</dbReference>
<dbReference type="Reactome" id="R-HSA-912694">
    <molecule id="P48551-2"/>
    <property type="pathway name" value="Regulation of IFNA/IFNB signaling"/>
</dbReference>
<dbReference type="Reactome" id="R-HSA-9679191">
    <molecule id="P48551-2"/>
    <property type="pathway name" value="Potential therapeutics for SARS"/>
</dbReference>
<dbReference type="Reactome" id="R-HSA-9705671">
    <molecule id="P48551-2"/>
    <property type="pathway name" value="SARS-CoV-2 activates/modulates innate and adaptive immune responses"/>
</dbReference>
<dbReference type="Reactome" id="R-HSA-9833109">
    <molecule id="P48551-2"/>
    <property type="pathway name" value="Evasion by RSV of host interferon responses"/>
</dbReference>
<dbReference type="SignaLink" id="P48551"/>
<dbReference type="SIGNOR" id="P48551"/>
<dbReference type="BioGRID-ORCS" id="3455">
    <property type="hits" value="23 hits in 1179 CRISPR screens"/>
</dbReference>
<dbReference type="ChiTaRS" id="IFNAR2">
    <property type="organism name" value="human"/>
</dbReference>
<dbReference type="EvolutionaryTrace" id="P48551"/>
<dbReference type="GeneWiki" id="IFNAR2"/>
<dbReference type="GenomeRNAi" id="3455"/>
<dbReference type="Pharos" id="P48551">
    <property type="development level" value="Tclin"/>
</dbReference>
<dbReference type="PRO" id="PR:P48551"/>
<dbReference type="Proteomes" id="UP000005640">
    <property type="component" value="Chromosome 21"/>
</dbReference>
<dbReference type="RNAct" id="P48551">
    <property type="molecule type" value="protein"/>
</dbReference>
<dbReference type="Bgee" id="ENSG00000159110">
    <property type="expression patterns" value="Expressed in blood and 196 other cell types or tissues"/>
</dbReference>
<dbReference type="ExpressionAtlas" id="P48551">
    <property type="expression patterns" value="baseline and differential"/>
</dbReference>
<dbReference type="GO" id="GO:0005576">
    <property type="term" value="C:extracellular region"/>
    <property type="evidence" value="ECO:0000304"/>
    <property type="project" value="ProtInc"/>
</dbReference>
<dbReference type="GO" id="GO:0005615">
    <property type="term" value="C:extracellular space"/>
    <property type="evidence" value="ECO:0000314"/>
    <property type="project" value="UniProtKB"/>
</dbReference>
<dbReference type="GO" id="GO:0005886">
    <property type="term" value="C:plasma membrane"/>
    <property type="evidence" value="ECO:0000314"/>
    <property type="project" value="UniProtKB"/>
</dbReference>
<dbReference type="GO" id="GO:0043235">
    <property type="term" value="C:receptor complex"/>
    <property type="evidence" value="ECO:0000353"/>
    <property type="project" value="ComplexPortal"/>
</dbReference>
<dbReference type="GO" id="GO:0019955">
    <property type="term" value="F:cytokine binding"/>
    <property type="evidence" value="ECO:0000353"/>
    <property type="project" value="UniProtKB"/>
</dbReference>
<dbReference type="GO" id="GO:0008269">
    <property type="term" value="F:JAK pathway signal transduction adaptor activity"/>
    <property type="evidence" value="ECO:0000304"/>
    <property type="project" value="UniProt"/>
</dbReference>
<dbReference type="GO" id="GO:0019901">
    <property type="term" value="F:protein kinase binding"/>
    <property type="evidence" value="ECO:0000353"/>
    <property type="project" value="UniProtKB"/>
</dbReference>
<dbReference type="GO" id="GO:0019962">
    <property type="term" value="F:type I interferon binding"/>
    <property type="evidence" value="ECO:0000353"/>
    <property type="project" value="UniProtKB"/>
</dbReference>
<dbReference type="GO" id="GO:0004905">
    <property type="term" value="F:type I interferon receptor activity"/>
    <property type="evidence" value="ECO:0000314"/>
    <property type="project" value="UniProtKB"/>
</dbReference>
<dbReference type="GO" id="GO:0007166">
    <property type="term" value="P:cell surface receptor signaling pathway"/>
    <property type="evidence" value="ECO:0000304"/>
    <property type="project" value="ProtInc"/>
</dbReference>
<dbReference type="GO" id="GO:0007259">
    <property type="term" value="P:cell surface receptor signaling pathway via JAK-STAT"/>
    <property type="evidence" value="ECO:0000314"/>
    <property type="project" value="UniProtKB"/>
</dbReference>
<dbReference type="GO" id="GO:0035458">
    <property type="term" value="P:cellular response to interferon-beta"/>
    <property type="evidence" value="ECO:0000314"/>
    <property type="project" value="UniProt"/>
</dbReference>
<dbReference type="GO" id="GO:0098586">
    <property type="term" value="P:cellular response to virus"/>
    <property type="evidence" value="ECO:0000303"/>
    <property type="project" value="ComplexPortal"/>
</dbReference>
<dbReference type="GO" id="GO:0051607">
    <property type="term" value="P:defense response to virus"/>
    <property type="evidence" value="ECO:0000315"/>
    <property type="project" value="UniProtKB"/>
</dbReference>
<dbReference type="GO" id="GO:0035455">
    <property type="term" value="P:response to interferon-alpha"/>
    <property type="evidence" value="ECO:0000314"/>
    <property type="project" value="UniProtKB"/>
</dbReference>
<dbReference type="GO" id="GO:0035456">
    <property type="term" value="P:response to interferon-beta"/>
    <property type="evidence" value="ECO:0000314"/>
    <property type="project" value="UniProtKB"/>
</dbReference>
<dbReference type="GO" id="GO:0009615">
    <property type="term" value="P:response to virus"/>
    <property type="evidence" value="ECO:0000304"/>
    <property type="project" value="ProtInc"/>
</dbReference>
<dbReference type="GO" id="GO:0060337">
    <property type="term" value="P:type I interferon-mediated signaling pathway"/>
    <property type="evidence" value="ECO:0000314"/>
    <property type="project" value="UniProtKB"/>
</dbReference>
<dbReference type="FunFam" id="2.60.40.10:FF:000909">
    <property type="entry name" value="Interferon alpha/beta receptor 2"/>
    <property type="match status" value="1"/>
</dbReference>
<dbReference type="FunFam" id="2.60.40.10:FF:001156">
    <property type="entry name" value="Interferon alpha/beta receptor 2"/>
    <property type="match status" value="1"/>
</dbReference>
<dbReference type="Gene3D" id="2.60.40.10">
    <property type="entry name" value="Immunoglobulins"/>
    <property type="match status" value="2"/>
</dbReference>
<dbReference type="InterPro" id="IPR003961">
    <property type="entry name" value="FN3_dom"/>
</dbReference>
<dbReference type="InterPro" id="IPR036116">
    <property type="entry name" value="FN3_sf"/>
</dbReference>
<dbReference type="InterPro" id="IPR013783">
    <property type="entry name" value="Ig-like_fold"/>
</dbReference>
<dbReference type="InterPro" id="IPR015373">
    <property type="entry name" value="Interferon/interleukin_rcp_dom"/>
</dbReference>
<dbReference type="InterPro" id="IPR050650">
    <property type="entry name" value="Type-II_Cytokine-TF_Rcpt"/>
</dbReference>
<dbReference type="PANTHER" id="PTHR20859:SF84">
    <property type="entry name" value="INTERFERON ALPHA_BETA RECEPTOR 2"/>
    <property type="match status" value="1"/>
</dbReference>
<dbReference type="PANTHER" id="PTHR20859">
    <property type="entry name" value="INTERFERON/INTERLEUKIN RECEPTOR"/>
    <property type="match status" value="1"/>
</dbReference>
<dbReference type="Pfam" id="PF09294">
    <property type="entry name" value="Interfer-bind"/>
    <property type="match status" value="1"/>
</dbReference>
<dbReference type="Pfam" id="PF01108">
    <property type="entry name" value="Tissue_fac"/>
    <property type="match status" value="1"/>
</dbReference>
<dbReference type="SUPFAM" id="SSF49265">
    <property type="entry name" value="Fibronectin type III"/>
    <property type="match status" value="2"/>
</dbReference>
<reference key="1">
    <citation type="journal article" date="1994" name="Cell">
        <title>The human interferon alpha/beta receptor: characterization and molecular cloning.</title>
        <authorList>
            <person name="Novick D."/>
            <person name="Cohen B."/>
            <person name="Rubinstein M."/>
        </authorList>
    </citation>
    <scope>NUCLEOTIDE SEQUENCE [MRNA] (ISOFORM 2)</scope>
    <scope>PARTIAL PROTEIN SEQUENCE</scope>
    <scope>GLYCOSYLATION AT ASN-87 AND ASN-192</scope>
    <scope>FUNCTION</scope>
    <scope>SUBUNIT</scope>
    <scope>INTERACTION WITH JAK1</scope>
    <scope>SUBCELLULAR LOCATION</scope>
    <scope>TISSUE SPECIFICITY</scope>
    <scope>VARIANT VAL-10</scope>
    <source>
        <tissue>Monocyte</tissue>
    </source>
</reference>
<reference key="2">
    <citation type="journal article" date="1995" name="EMBO J.">
        <title>Mutant U5A cells are complemented by an interferon-alpha beta receptor subunit generated by alternative processing of a new member of a cytokine receptor gene cluster.</title>
        <authorList>
            <person name="Lutfalla G."/>
            <person name="Holland S.J."/>
            <person name="Cinato E."/>
            <person name="Monneron D."/>
            <person name="Reboul J."/>
            <person name="Rogers N.C."/>
            <person name="Smith J.M."/>
            <person name="Stark G.R."/>
            <person name="Gardiner K."/>
            <person name="Mogensen K.E."/>
            <person name="Kerr I.M."/>
            <person name="Uze G."/>
        </authorList>
    </citation>
    <scope>NUCLEOTIDE SEQUENCE [GENOMIC DNA / MRNA] (ISOFORMS 1; 2 AND 3)</scope>
    <scope>TISSUE SPECIFICITY</scope>
    <source>
        <tissue>Lymphoblastoma</tissue>
    </source>
</reference>
<reference key="3">
    <citation type="journal article" date="1995" name="J. Biol. Chem.">
        <title>Cloning and expression of a long form of the beta subunit of the interferon alpha beta receptor that is required for signaling.</title>
        <authorList>
            <person name="Domanski P."/>
            <person name="Witte M."/>
            <person name="Kellum M."/>
            <person name="Rubinstein M."/>
            <person name="Hackett R."/>
            <person name="Pitha P."/>
            <person name="Colamonici O.R."/>
        </authorList>
    </citation>
    <scope>NUCLEOTIDE SEQUENCE [MRNA] (ISOFORM 1)</scope>
    <scope>FUNCTION</scope>
    <scope>SUBUNIT</scope>
    <source>
        <tissue>Myeloma</tissue>
    </source>
</reference>
<reference key="4">
    <citation type="journal article" date="1995" name="J. Leukoc. Biol.">
        <title>Soluble and membrane-anchored forms of the human IFN-alpha/beta receptor.</title>
        <authorList>
            <person name="Novick D."/>
            <person name="Cohen B."/>
            <person name="Tal N."/>
            <person name="Rubinstein M."/>
        </authorList>
    </citation>
    <scope>NUCLEOTIDE SEQUENCE [MRNA] (ISOFORM 3)</scope>
    <scope>PARTIAL PROTEIN SEQUENCE</scope>
    <scope>FUNCTION</scope>
    <scope>INTERACTION WITH JAK1</scope>
    <scope>ALTERNATIVE SPLICING</scope>
    <scope>SUBCELLULAR LOCATION</scope>
    <scope>TISSUE SPECIFICITY</scope>
    <scope>PHOSPHORYLATION</scope>
    <scope>VARIANT VAL-10</scope>
    <source>
        <tissue>Blood</tissue>
    </source>
</reference>
<reference key="5">
    <citation type="submission" date="1996-10" db="EMBL/GenBank/DDBJ databases">
        <authorList>
            <person name="Cohen B."/>
            <person name="Kim S.H."/>
            <person name="Novick D."/>
            <person name="Rubinstein M."/>
        </authorList>
    </citation>
    <scope>NUCLEOTIDE SEQUENCE [MRNA] (ISOFORM 1)</scope>
    <scope>VARIANT VAL-10</scope>
    <source>
        <tissue>Blood</tissue>
    </source>
</reference>
<reference key="6">
    <citation type="submission" date="2004-09" db="EMBL/GenBank/DDBJ databases">
        <authorList>
            <consortium name="SeattleSNPs variation discovery resource"/>
        </authorList>
    </citation>
    <scope>NUCLEOTIDE SEQUENCE [GENOMIC DNA]</scope>
    <scope>VARIANTS SER-8; VAL-10 AND VAL-196</scope>
</reference>
<reference key="7">
    <citation type="journal article" date="2004" name="Nat. Genet.">
        <title>Complete sequencing and characterization of 21,243 full-length human cDNAs.</title>
        <authorList>
            <person name="Ota T."/>
            <person name="Suzuki Y."/>
            <person name="Nishikawa T."/>
            <person name="Otsuki T."/>
            <person name="Sugiyama T."/>
            <person name="Irie R."/>
            <person name="Wakamatsu A."/>
            <person name="Hayashi K."/>
            <person name="Sato H."/>
            <person name="Nagai K."/>
            <person name="Kimura K."/>
            <person name="Makita H."/>
            <person name="Sekine M."/>
            <person name="Obayashi M."/>
            <person name="Nishi T."/>
            <person name="Shibahara T."/>
            <person name="Tanaka T."/>
            <person name="Ishii S."/>
            <person name="Yamamoto J."/>
            <person name="Saito K."/>
            <person name="Kawai Y."/>
            <person name="Isono Y."/>
            <person name="Nakamura Y."/>
            <person name="Nagahari K."/>
            <person name="Murakami K."/>
            <person name="Yasuda T."/>
            <person name="Iwayanagi T."/>
            <person name="Wagatsuma M."/>
            <person name="Shiratori A."/>
            <person name="Sudo H."/>
            <person name="Hosoiri T."/>
            <person name="Kaku Y."/>
            <person name="Kodaira H."/>
            <person name="Kondo H."/>
            <person name="Sugawara M."/>
            <person name="Takahashi M."/>
            <person name="Kanda K."/>
            <person name="Yokoi T."/>
            <person name="Furuya T."/>
            <person name="Kikkawa E."/>
            <person name="Omura Y."/>
            <person name="Abe K."/>
            <person name="Kamihara K."/>
            <person name="Katsuta N."/>
            <person name="Sato K."/>
            <person name="Tanikawa M."/>
            <person name="Yamazaki M."/>
            <person name="Ninomiya K."/>
            <person name="Ishibashi T."/>
            <person name="Yamashita H."/>
            <person name="Murakawa K."/>
            <person name="Fujimori K."/>
            <person name="Tanai H."/>
            <person name="Kimata M."/>
            <person name="Watanabe M."/>
            <person name="Hiraoka S."/>
            <person name="Chiba Y."/>
            <person name="Ishida S."/>
            <person name="Ono Y."/>
            <person name="Takiguchi S."/>
            <person name="Watanabe S."/>
            <person name="Yosida M."/>
            <person name="Hotuta T."/>
            <person name="Kusano J."/>
            <person name="Kanehori K."/>
            <person name="Takahashi-Fujii A."/>
            <person name="Hara H."/>
            <person name="Tanase T.-O."/>
            <person name="Nomura Y."/>
            <person name="Togiya S."/>
            <person name="Komai F."/>
            <person name="Hara R."/>
            <person name="Takeuchi K."/>
            <person name="Arita M."/>
            <person name="Imose N."/>
            <person name="Musashino K."/>
            <person name="Yuuki H."/>
            <person name="Oshima A."/>
            <person name="Sasaki N."/>
            <person name="Aotsuka S."/>
            <person name="Yoshikawa Y."/>
            <person name="Matsunawa H."/>
            <person name="Ichihara T."/>
            <person name="Shiohata N."/>
            <person name="Sano S."/>
            <person name="Moriya S."/>
            <person name="Momiyama H."/>
            <person name="Satoh N."/>
            <person name="Takami S."/>
            <person name="Terashima Y."/>
            <person name="Suzuki O."/>
            <person name="Nakagawa S."/>
            <person name="Senoh A."/>
            <person name="Mizoguchi H."/>
            <person name="Goto Y."/>
            <person name="Shimizu F."/>
            <person name="Wakebe H."/>
            <person name="Hishigaki H."/>
            <person name="Watanabe T."/>
            <person name="Sugiyama A."/>
            <person name="Takemoto M."/>
            <person name="Kawakami B."/>
            <person name="Yamazaki M."/>
            <person name="Watanabe K."/>
            <person name="Kumagai A."/>
            <person name="Itakura S."/>
            <person name="Fukuzumi Y."/>
            <person name="Fujimori Y."/>
            <person name="Komiyama M."/>
            <person name="Tashiro H."/>
            <person name="Tanigami A."/>
            <person name="Fujiwara T."/>
            <person name="Ono T."/>
            <person name="Yamada K."/>
            <person name="Fujii Y."/>
            <person name="Ozaki K."/>
            <person name="Hirao M."/>
            <person name="Ohmori Y."/>
            <person name="Kawabata A."/>
            <person name="Hikiji T."/>
            <person name="Kobatake N."/>
            <person name="Inagaki H."/>
            <person name="Ikema Y."/>
            <person name="Okamoto S."/>
            <person name="Okitani R."/>
            <person name="Kawakami T."/>
            <person name="Noguchi S."/>
            <person name="Itoh T."/>
            <person name="Shigeta K."/>
            <person name="Senba T."/>
            <person name="Matsumura K."/>
            <person name="Nakajima Y."/>
            <person name="Mizuno T."/>
            <person name="Morinaga M."/>
            <person name="Sasaki M."/>
            <person name="Togashi T."/>
            <person name="Oyama M."/>
            <person name="Hata H."/>
            <person name="Watanabe M."/>
            <person name="Komatsu T."/>
            <person name="Mizushima-Sugano J."/>
            <person name="Satoh T."/>
            <person name="Shirai Y."/>
            <person name="Takahashi Y."/>
            <person name="Nakagawa K."/>
            <person name="Okumura K."/>
            <person name="Nagase T."/>
            <person name="Nomura N."/>
            <person name="Kikuchi H."/>
            <person name="Masuho Y."/>
            <person name="Yamashita R."/>
            <person name="Nakai K."/>
            <person name="Yada T."/>
            <person name="Nakamura Y."/>
            <person name="Ohara O."/>
            <person name="Isogai T."/>
            <person name="Sugano S."/>
        </authorList>
    </citation>
    <scope>NUCLEOTIDE SEQUENCE [LARGE SCALE MRNA] (ISOFORM 1)</scope>
    <source>
        <tissue>Uterus</tissue>
    </source>
</reference>
<reference key="8">
    <citation type="submission" date="2004-06" db="EMBL/GenBank/DDBJ databases">
        <title>Cloning of human full open reading frames in Gateway(TM) system entry vector (pDONR201).</title>
        <authorList>
            <person name="Ebert L."/>
            <person name="Schick M."/>
            <person name="Neubert P."/>
            <person name="Schatten R."/>
            <person name="Henze S."/>
            <person name="Korn B."/>
        </authorList>
    </citation>
    <scope>NUCLEOTIDE SEQUENCE [LARGE SCALE MRNA] (ISOFORM 2)</scope>
</reference>
<reference key="9">
    <citation type="journal article" date="2000" name="Nature">
        <title>The DNA sequence of human chromosome 21.</title>
        <authorList>
            <person name="Hattori M."/>
            <person name="Fujiyama A."/>
            <person name="Taylor T.D."/>
            <person name="Watanabe H."/>
            <person name="Yada T."/>
            <person name="Park H.-S."/>
            <person name="Toyoda A."/>
            <person name="Ishii K."/>
            <person name="Totoki Y."/>
            <person name="Choi D.-K."/>
            <person name="Groner Y."/>
            <person name="Soeda E."/>
            <person name="Ohki M."/>
            <person name="Takagi T."/>
            <person name="Sakaki Y."/>
            <person name="Taudien S."/>
            <person name="Blechschmidt K."/>
            <person name="Polley A."/>
            <person name="Menzel U."/>
            <person name="Delabar J."/>
            <person name="Kumpf K."/>
            <person name="Lehmann R."/>
            <person name="Patterson D."/>
            <person name="Reichwald K."/>
            <person name="Rump A."/>
            <person name="Schillhabel M."/>
            <person name="Schudy A."/>
            <person name="Zimmermann W."/>
            <person name="Rosenthal A."/>
            <person name="Kudoh J."/>
            <person name="Shibuya K."/>
            <person name="Kawasaki K."/>
            <person name="Asakawa S."/>
            <person name="Shintani A."/>
            <person name="Sasaki T."/>
            <person name="Nagamine K."/>
            <person name="Mitsuyama S."/>
            <person name="Antonarakis S.E."/>
            <person name="Minoshima S."/>
            <person name="Shimizu N."/>
            <person name="Nordsiek G."/>
            <person name="Hornischer K."/>
            <person name="Brandt P."/>
            <person name="Scharfe M."/>
            <person name="Schoen O."/>
            <person name="Desario A."/>
            <person name="Reichelt J."/>
            <person name="Kauer G."/>
            <person name="Bloecker H."/>
            <person name="Ramser J."/>
            <person name="Beck A."/>
            <person name="Klages S."/>
            <person name="Hennig S."/>
            <person name="Riesselmann L."/>
            <person name="Dagand E."/>
            <person name="Wehrmeyer S."/>
            <person name="Borzym K."/>
            <person name="Gardiner K."/>
            <person name="Nizetic D."/>
            <person name="Francis F."/>
            <person name="Lehrach H."/>
            <person name="Reinhardt R."/>
            <person name="Yaspo M.-L."/>
        </authorList>
    </citation>
    <scope>NUCLEOTIDE SEQUENCE [LARGE SCALE GENOMIC DNA]</scope>
</reference>
<reference key="10">
    <citation type="submission" date="2005-09" db="EMBL/GenBank/DDBJ databases">
        <authorList>
            <person name="Mural R.J."/>
            <person name="Istrail S."/>
            <person name="Sutton G.G."/>
            <person name="Florea L."/>
            <person name="Halpern A.L."/>
            <person name="Mobarry C.M."/>
            <person name="Lippert R."/>
            <person name="Walenz B."/>
            <person name="Shatkay H."/>
            <person name="Dew I."/>
            <person name="Miller J.R."/>
            <person name="Flanigan M.J."/>
            <person name="Edwards N.J."/>
            <person name="Bolanos R."/>
            <person name="Fasulo D."/>
            <person name="Halldorsson B.V."/>
            <person name="Hannenhalli S."/>
            <person name="Turner R."/>
            <person name="Yooseph S."/>
            <person name="Lu F."/>
            <person name="Nusskern D.R."/>
            <person name="Shue B.C."/>
            <person name="Zheng X.H."/>
            <person name="Zhong F."/>
            <person name="Delcher A.L."/>
            <person name="Huson D.H."/>
            <person name="Kravitz S.A."/>
            <person name="Mouchard L."/>
            <person name="Reinert K."/>
            <person name="Remington K.A."/>
            <person name="Clark A.G."/>
            <person name="Waterman M.S."/>
            <person name="Eichler E.E."/>
            <person name="Adams M.D."/>
            <person name="Hunkapiller M.W."/>
            <person name="Myers E.W."/>
            <person name="Venter J.C."/>
        </authorList>
    </citation>
    <scope>NUCLEOTIDE SEQUENCE [LARGE SCALE GENOMIC DNA]</scope>
</reference>
<reference key="11">
    <citation type="journal article" date="1996" name="J. Biol. Chem.">
        <title>Differences in interferon alpha and beta signaling. Interferon beta selectively induces the interaction of the alpha and betaL subunits of the type I interferon receptor.</title>
        <authorList>
            <person name="Platanias L.C."/>
            <person name="Uddin S."/>
            <person name="Domanski P."/>
            <person name="Colamonici O.R."/>
        </authorList>
    </citation>
    <scope>FUNCTION</scope>
</reference>
<reference key="12">
    <citation type="journal article" date="1996" name="J. Biol. Chem.">
        <title>The human type I interferon receptor. Identification of the interferon beta-specific receptor-associated phosphoprotein.</title>
        <authorList>
            <person name="Croze E."/>
            <person name="Russell-Harde D."/>
            <person name="Wagner T.C."/>
            <person name="Pu H."/>
            <person name="Pfeffer L.M."/>
            <person name="Perez H.D."/>
        </authorList>
    </citation>
    <scope>FUNCTION</scope>
</reference>
<reference key="13">
    <citation type="journal article" date="1997" name="Mol. Cell. Biol.">
        <title>Functional subdomains of STAT2 required for preassociation with the alpha interferon receptor and for signaling.</title>
        <authorList>
            <person name="Li X."/>
            <person name="Leung S."/>
            <person name="Kerr I.M."/>
            <person name="Stark G.R."/>
        </authorList>
    </citation>
    <scope>FUNCTION</scope>
    <scope>INTERACTION WITH STAT1 AND STAT2</scope>
</reference>
<reference key="14">
    <citation type="journal article" date="1999" name="Biochem. Biophys. Res. Commun.">
        <title>Formation of a uniquely stable type I interferon receptor complex by interferon beta is dependent upon particular interactions between interferon beta and its receptor and independent of tyrosine phosphorylation.</title>
        <authorList>
            <person name="Russell-Harde D."/>
            <person name="Wagner T.C."/>
            <person name="Perez H.D."/>
            <person name="Croze E."/>
        </authorList>
    </citation>
    <scope>INTERACTION WITH IFNAR1</scope>
    <scope>FUNCTION</scope>
</reference>
<reference key="15">
    <citation type="journal article" date="1999" name="J. Mol. Biol.">
        <title>Mutational and structural analysis of the binding interface between type I interferons and their receptor Ifnar2.</title>
        <authorList>
            <person name="Piehler J."/>
            <person name="Schreiber G."/>
        </authorList>
    </citation>
    <scope>FUNCTION</scope>
</reference>
<reference key="16">
    <citation type="journal article" date="2002" name="J. Biol. Chem.">
        <title>Interferon signaling is dependent on specific tyrosines located within the intracellular domain of IFNAR2c. Expression of IFNAR2c tyrosine mutants in U5A cells.</title>
        <authorList>
            <person name="Wagner T.C."/>
            <person name="Velichko S."/>
            <person name="Vogel D."/>
            <person name="Rani M.R."/>
            <person name="Leung S."/>
            <person name="Ransohoff R.M."/>
            <person name="Stark G.R."/>
            <person name="Perez H.D."/>
            <person name="Croze E."/>
        </authorList>
    </citation>
    <scope>FUNCTION</scope>
    <scope>PHOSPHORYLATION AT TYR-337 AND TYR-512</scope>
    <scope>MUTAGENESIS OF TYR-269; TYR-306; TYR-316; TYR-318; TYR-337; TYR-411 AND TYR-512</scope>
</reference>
<reference key="17">
    <citation type="journal article" date="2002" name="J. Biol. Chem.">
        <title>STAT3 activation by type I interferons is dependent on specific tyrosines located in the cytoplasmic domain of interferon receptor chain 2c. Activation of multiple STATS proceeds through the redundant usage of two tyrosine residues.</title>
        <authorList>
            <person name="Velichko S."/>
            <person name="Wagner T.C."/>
            <person name="Turkson J."/>
            <person name="Jove R."/>
            <person name="Croze E."/>
        </authorList>
    </citation>
    <scope>FUNCTION</scope>
    <scope>PHOSPHORYLATION AT TYR-337 AND TYR-512</scope>
    <scope>MUTAGENESIS OF TYR-269; TYR-306; TYR-316; TYR-318; TYR-337; TYR-411 AND TYR-512</scope>
</reference>
<reference key="18">
    <citation type="journal article" date="2007" name="FASEB J.">
        <title>A structural basis for interferon-alpha-receptor interactions.</title>
        <authorList>
            <person name="Kumaran J."/>
            <person name="Wei L."/>
            <person name="Kotra L.P."/>
            <person name="Fish E.N."/>
        </authorList>
    </citation>
    <scope>FUNCTION</scope>
</reference>
<reference key="19">
    <citation type="journal article" date="2013" name="J. Proteome Res.">
        <title>Toward a comprehensive characterization of a human cancer cell phosphoproteome.</title>
        <authorList>
            <person name="Zhou H."/>
            <person name="Di Palma S."/>
            <person name="Preisinger C."/>
            <person name="Peng M."/>
            <person name="Polat A.N."/>
            <person name="Heck A.J."/>
            <person name="Mohammed S."/>
        </authorList>
    </citation>
    <scope>PHOSPHORYLATION [LARGE SCALE ANALYSIS] AT SER-400</scope>
    <scope>IDENTIFICATION BY MASS SPECTROMETRY [LARGE SCALE ANALYSIS]</scope>
    <source>
        <tissue>Cervix carcinoma</tissue>
    </source>
</reference>
<reference key="20">
    <citation type="journal article" date="2003" name="Structure">
        <title>The human type I interferon receptor: NMR structure reveals the molecular basis of ligand binding.</title>
        <authorList>
            <person name="Chill J.H."/>
            <person name="Quadt S.R."/>
            <person name="Levy R."/>
            <person name="Schreiber G."/>
            <person name="Anglister J."/>
        </authorList>
    </citation>
    <scope>STRUCTURE BY NMR OF 28-237</scope>
    <scope>DISULFIDE BONDS</scope>
</reference>
<reference key="21">
    <citation type="journal article" date="2006" name="Proc. Natl. Acad. Sci. U.S.A.">
        <title>Class II cytokine receptor gene cluster is a major locus for hepatitis B persistence.</title>
        <authorList>
            <person name="Frodsham A.J."/>
            <person name="Zhang L."/>
            <person name="Dumpis U."/>
            <person name="Taib N.A.M."/>
            <person name="Best S."/>
            <person name="Durham A."/>
            <person name="Hennig B.J.W."/>
            <person name="Hellier S."/>
            <person name="Knapp S."/>
            <person name="Wright M."/>
            <person name="Chiaramonte M."/>
            <person name="Bell J.I."/>
            <person name="Graves M."/>
            <person name="Whittle H.C."/>
            <person name="Thomas H.C."/>
            <person name="Thursz M.R."/>
            <person name="Hill A.V.S."/>
        </authorList>
    </citation>
    <scope>INVOLVEMENT IN SUSCEPTIBILITY TO HBV INFECTION</scope>
    <scope>VARIANTS SER-8 AND VAL-10</scope>
    <scope>CHARACTERIZATION OF VARIANT SER-8</scope>
</reference>
<reference key="22">
    <citation type="journal article" date="2013" name="Cell Rep.">
        <title>A BRISC-SHMT complex deubiquitinates IFNAR1 and regulates interferon responses.</title>
        <authorList>
            <person name="Zheng H."/>
            <person name="Gupta V."/>
            <person name="Patterson-Fortin J."/>
            <person name="Bhattacharya S."/>
            <person name="Katlinski K."/>
            <person name="Wu J."/>
            <person name="Varghese B."/>
            <person name="Carbone C.J."/>
            <person name="Aressy B."/>
            <person name="Fuchs S.Y."/>
            <person name="Greenberg R.A."/>
        </authorList>
    </citation>
    <scope>INTERACTION WITH IFNAR1</scope>
    <scope>IDENTIFICATION BY MASS SPECTROMETRY</scope>
</reference>
<reference key="23">
    <citation type="journal article" date="2006" name="Protein Sci.">
        <title>Determination of the human type I interferon receptor binding site on human interferon-alpha2 by cross saturation and an NMR-based model of the complex.</title>
        <authorList>
            <person name="Quadt-Akabayov S.R."/>
            <person name="Chill J.H."/>
            <person name="Levy R."/>
            <person name="Kessler N."/>
            <person name="Anglister J."/>
        </authorList>
    </citation>
    <scope>STRUCTURE BY NMR OF 28-239 IN COMPLEX WITH IFNA2</scope>
    <scope>DISULFIDE BONDS</scope>
</reference>
<reference key="24">
    <citation type="journal article" date="2010" name="Biochemistry">
        <title>Intermolecular interactions in a 44 kDa interferon-receptor complex detected by asymmetric reverse-protonation and two-dimensional NOESY.</title>
        <authorList>
            <person name="Nudelman I."/>
            <person name="Akabayov S.R."/>
            <person name="Schnur E."/>
            <person name="Biron Z."/>
            <person name="Levy R."/>
            <person name="Xu Y."/>
            <person name="Yang D."/>
            <person name="Anglister J."/>
        </authorList>
    </citation>
    <scope>STRUCTURE BY NMR OF 28-239 IN COMPLEX WITH IFNA2</scope>
    <scope>DISULFIDE BONDS</scope>
</reference>
<reference key="25">
    <citation type="journal article" date="2011" name="Cell">
        <title>Structural linkage between ligand discrimination and receptor activation by type I interferons.</title>
        <authorList>
            <person name="Thomas C."/>
            <person name="Moraga I."/>
            <person name="Levin D."/>
            <person name="Krutzik P.O."/>
            <person name="Podoplelova Y."/>
            <person name="Trejo A."/>
            <person name="Lee C."/>
            <person name="Yarden G."/>
            <person name="Vleck S.E."/>
            <person name="Glenn J.S."/>
            <person name="Nolan G.P."/>
            <person name="Piehler J."/>
            <person name="Schreiber G."/>
            <person name="Garcia K.C."/>
        </authorList>
    </citation>
    <scope>X-RAY CRYSTALLOGRAPHY (2.00 ANGSTROMS) OF 28-436 IN COMPLEX WITH IFNAR1 AND IFNW1</scope>
    <scope>FUNCTION</scope>
    <scope>DISULFIDE BONDS</scope>
</reference>
<reference key="26">
    <citation type="journal article" date="2011" name="J. Am. Chem. Soc.">
        <title>Observation of intermolecular interactions in large protein complexes by 2D-double difference nuclear Overhauser enhancement spectroscopy: application to the 44 kDa interferon-receptor complex.</title>
        <authorList>
            <person name="Nudelman I."/>
            <person name="Akabayov S.R."/>
            <person name="Scherf T."/>
            <person name="Anglister J."/>
        </authorList>
    </citation>
    <scope>STRUCTURE BY NMR OF 28-237</scope>
    <scope>DISULFIDE BONDS</scope>
</reference>
<reference key="27">
    <citation type="journal article" date="2015" name="Sci. Transl. Med.">
        <title>Human IFNAR2 deficiency: Lessons for antiviral immunity.</title>
        <authorList>
            <person name="Duncan C.J."/>
            <person name="Mohamad S.M."/>
            <person name="Young D.F."/>
            <person name="Skelton A.J."/>
            <person name="Leahy T.R."/>
            <person name="Munday D.C."/>
            <person name="Butler K.M."/>
            <person name="Morfopoulou S."/>
            <person name="Brown J.R."/>
            <person name="Hubank M."/>
            <person name="Connell J."/>
            <person name="Gavin P.J."/>
            <person name="McMahon C."/>
            <person name="Dempsey E."/>
            <person name="Lynch N.E."/>
            <person name="Jacques T.S."/>
            <person name="Valappil M."/>
            <person name="Cant A.J."/>
            <person name="Breuer J."/>
            <person name="Engelhardt K.R."/>
            <person name="Randall R.E."/>
            <person name="Hambleton S."/>
        </authorList>
    </citation>
    <scope>INVOLVEMENT IN IMD45</scope>
    <scope>FUNCTION</scope>
</reference>
<reference key="28">
    <citation type="journal article" date="2017" name="Nat. Struct. Mol. Biol.">
        <title>STAT2 is an essential adaptor in USP18-mediated suppression of type I interferon signaling.</title>
        <authorList>
            <person name="Arimoto K.I."/>
            <person name="Loechte S."/>
            <person name="Stoner S.A."/>
            <person name="Burkart C."/>
            <person name="Zhang Y."/>
            <person name="Miyauchi S."/>
            <person name="Wilmes S."/>
            <person name="Fan J.B."/>
            <person name="Heinisch J.J."/>
            <person name="Li Z."/>
            <person name="Yan M."/>
            <person name="Pellegrini S."/>
            <person name="Colland F."/>
            <person name="Piehler J."/>
            <person name="Zhang D.E."/>
        </authorList>
    </citation>
    <scope>FUNCTION</scope>
    <scope>INTERACTION WITH STAT2 AND USP18</scope>
    <scope>REGION</scope>
</reference>
<reference key="29">
    <citation type="journal article" date="2020" name="Science">
        <title>Inborn errors of type I IFN immunity in patients with life-threatening COVID-19.</title>
        <authorList>
            <consortium name="COVID-STORM Clinicians"/>
            <consortium name="COVID Clinicians"/>
            <consortium name="Imagine COVID Group"/>
            <consortium name="French COVID Cohort Study Group"/>
            <consortium name="CoV-Contact Cohort"/>
            <consortium name="Amsterdam UMC Covid-19 Biobank"/>
            <consortium name="COVID Human Genetic Effort"/>
            <consortium name="NIAID-USUHS/TAGC COVID Immunity Group"/>
            <person name="Zhang Q."/>
            <person name="Bastard P."/>
            <person name="Liu Z."/>
            <person name="Le Pen J."/>
            <person name="Moncada-Velez M."/>
            <person name="Chen J."/>
            <person name="Ogishi M."/>
            <person name="Sabli I.K.D."/>
            <person name="Hodeib S."/>
            <person name="Korol C."/>
            <person name="Rosain J."/>
            <person name="Bilguvar K."/>
            <person name="Ye J."/>
            <person name="Bolze A."/>
            <person name="Bigio B."/>
            <person name="Yang R."/>
            <person name="Arias A.A."/>
            <person name="Zhou Q."/>
            <person name="Zhang Y."/>
            <person name="Onodi F."/>
            <person name="Korniotis S."/>
            <person name="Karpf L."/>
            <person name="Philippot Q."/>
            <person name="Chbihi M."/>
            <person name="Bonnet-Madin L."/>
            <person name="Dorgham K."/>
            <person name="Smith N."/>
            <person name="Schneider W.M."/>
            <person name="Razooky B.S."/>
            <person name="Hoffmann H.H."/>
            <person name="Michailidis E."/>
            <person name="Moens L."/>
            <person name="Han J.E."/>
            <person name="Lorenzo L."/>
            <person name="Bizien L."/>
            <person name="Meade P."/>
            <person name="Neehus A.L."/>
            <person name="Ugurbil A.C."/>
            <person name="Corneau A."/>
            <person name="Kerner G."/>
            <person name="Zhang P."/>
            <person name="Rapaport F."/>
            <person name="Seeleuthner Y."/>
            <person name="Manry J."/>
            <person name="Masson C."/>
            <person name="Schmitt Y."/>
            <person name="Schlueter A."/>
            <person name="Le Voyer T."/>
            <person name="Khan T."/>
            <person name="Li J."/>
            <person name="Fellay J."/>
            <person name="Roussel L."/>
            <person name="Shahrooei M."/>
            <person name="Alosaimi M.F."/>
            <person name="Mansouri D."/>
            <person name="Al-Saud H."/>
            <person name="Al-Mulla F."/>
            <person name="Almourfi F."/>
            <person name="Al-Muhsen S.Z."/>
            <person name="Alsohime F."/>
            <person name="Al Turki S."/>
            <person name="Hasanato R."/>
            <person name="van de Beek D."/>
            <person name="Biondi A."/>
            <person name="Bettini L.R."/>
            <person name="D'Angio' M."/>
            <person name="Bonfanti P."/>
            <person name="Imberti L."/>
            <person name="Sottini A."/>
            <person name="Paghera S."/>
            <person name="Quiros-Roldan E."/>
            <person name="Rossi C."/>
            <person name="Oler A.J."/>
            <person name="Tompkins M.F."/>
            <person name="Alba C."/>
            <person name="Vandernoot I."/>
            <person name="Goffard J.C."/>
            <person name="Smits G."/>
            <person name="Migeotte I."/>
            <person name="Haerynck F."/>
            <person name="Soler-Palacin P."/>
            <person name="Martin-Nalda A."/>
            <person name="Colobran R."/>
            <person name="Morange P.E."/>
            <person name="Keles S."/>
            <person name="Coelkesen F."/>
            <person name="Ozcelik T."/>
            <person name="Yasar K.K."/>
            <person name="Senoglu S."/>
            <person name="Karabela S.N."/>
            <person name="Rodriguez-Gallego C."/>
            <person name="Novelli G."/>
            <person name="Hraiech S."/>
            <person name="Tandjaoui-Lambiotte Y."/>
            <person name="Duval X."/>
            <person name="Laouenan C."/>
            <person name="Snow A.L."/>
            <person name="Dalgard C.L."/>
            <person name="Milner J.D."/>
            <person name="Vinh D.C."/>
            <person name="Mogensen T.H."/>
            <person name="Marr N."/>
            <person name="Spaan A.N."/>
            <person name="Boisson B."/>
            <person name="Boisson-Dupuis S."/>
            <person name="Bustamante J."/>
            <person name="Puel A."/>
            <person name="Ciancanelli M.J."/>
            <person name="Meyts I."/>
            <person name="Maniatis T."/>
            <person name="Soumelis V."/>
            <person name="Amara A."/>
            <person name="Nussenzweig M."/>
            <person name="Garcia-Sastre A."/>
            <person name="Krammer F."/>
            <person name="Pujol A."/>
            <person name="Duffy D."/>
            <person name="Lifton R.P."/>
            <person name="Zhang S.Y."/>
            <person name="Gorochov G."/>
            <person name="Beziat V."/>
            <person name="Jouanguy E."/>
            <person name="Sancho-Shimizu V."/>
            <person name="Rice C.M."/>
            <person name="Abel L."/>
            <person name="Notarangelo L.D."/>
            <person name="Cobat A."/>
            <person name="Su H.C."/>
            <person name="Casanova J.L."/>
        </authorList>
    </citation>
    <scope>VARIANTS GLN-37; VAL-73; VAL-138; GLY-215; ARG-283; LEU-295; CYS-318; ASN-324; SER-346; SER-362; LEU-385 AND LEU-450</scope>
    <scope>CHARACTERIZATION OF VARIANTS GLN-37; VAL-73; VAL-138; GLY-215; ARG-283; LEU-295; CYS-318; ASN-324; SER-346; SER-362; LEU-385 AND LEU-450</scope>
    <scope>FUNCTION</scope>
</reference>
<organism>
    <name type="scientific">Homo sapiens</name>
    <name type="common">Human</name>
    <dbReference type="NCBI Taxonomy" id="9606"/>
    <lineage>
        <taxon>Eukaryota</taxon>
        <taxon>Metazoa</taxon>
        <taxon>Chordata</taxon>
        <taxon>Craniata</taxon>
        <taxon>Vertebrata</taxon>
        <taxon>Euteleostomi</taxon>
        <taxon>Mammalia</taxon>
        <taxon>Eutheria</taxon>
        <taxon>Euarchontoglires</taxon>
        <taxon>Primates</taxon>
        <taxon>Haplorrhini</taxon>
        <taxon>Catarrhini</taxon>
        <taxon>Hominidae</taxon>
        <taxon>Homo</taxon>
    </lineage>
</organism>
<proteinExistence type="evidence at protein level"/>
<protein>
    <recommendedName>
        <fullName>Interferon alpha/beta receptor 2</fullName>
        <shortName>IFN-R-2</shortName>
        <shortName>IFN-alpha binding protein</shortName>
        <shortName>IFN-alpha/beta receptor 2</shortName>
    </recommendedName>
    <alternativeName>
        <fullName>Interferon alpha binding protein</fullName>
    </alternativeName>
    <alternativeName>
        <fullName>Type I interferon receptor 2</fullName>
    </alternativeName>
</protein>
<keyword id="KW-0002">3D-structure</keyword>
<keyword id="KW-0025">Alternative splicing</keyword>
<keyword id="KW-1003">Cell membrane</keyword>
<keyword id="KW-0903">Direct protein sequencing</keyword>
<keyword id="KW-1015">Disulfide bond</keyword>
<keyword id="KW-0325">Glycoprotein</keyword>
<keyword id="KW-0472">Membrane</keyword>
<keyword id="KW-0597">Phosphoprotein</keyword>
<keyword id="KW-1267">Proteomics identification</keyword>
<keyword id="KW-0675">Receptor</keyword>
<keyword id="KW-1185">Reference proteome</keyword>
<keyword id="KW-0964">Secreted</keyword>
<keyword id="KW-0732">Signal</keyword>
<keyword id="KW-0812">Transmembrane</keyword>
<keyword id="KW-1133">Transmembrane helix</keyword>
<gene>
    <name type="primary">IFNAR2</name>
    <name type="synonym">IFNABR</name>
    <name type="synonym">IFNARB</name>
</gene>
<comment type="function">
    <text evidence="4 5 6 7 10 13 15 16 17 19 20 21 22 23 24">Together with IFNAR1, forms the heterodimeric receptor for type I interferons (including interferons alpha, beta, epsilon, omega and kappa) (PubMed:10049744, PubMed:10556041, PubMed:21854986, PubMed:26424569, PubMed:28165510, PubMed:32972995, PubMed:7665574, PubMed:7759950, PubMed:8181059, PubMed:8798579, PubMed:8969169). Type I interferon binding activates the JAK-STAT signaling cascade, resulting in transcriptional activation or repression of interferon-regulated genes that encode the effectors of the interferon response (PubMed:10049744, PubMed:17517919, PubMed:21854986, PubMed:26424569, PubMed:28165510, PubMed:32972995, PubMed:7665574, PubMed:7759950, PubMed:8181059, PubMed:8798579, PubMed:8969169). Mechanistically, type I interferon-binding brings the IFNAR1 and IFNAR2 subunits into close proximity with one another, driving their associated Janus kinases (JAKs) (TYK2 bound to IFNAR1 and JAK1 bound to IFNAR2) to cross-phosphorylate one another (PubMed:10556041, PubMed:11682488, PubMed:12105218, PubMed:21854986, PubMed:32972995). The activated kinases phosphorylate specific tyrosine residues on the intracellular domains of IFNAR1 and IFNAR2, forming docking sites for the STAT transcription factors (STAT1, STAT2 and STAT) (PubMed:11682488, PubMed:12105218, PubMed:21854986, PubMed:32972995). STAT proteins are then phosphorylated by the JAKs, promoting their translocation into the nucleus to regulate expression of interferon-regulated genes (PubMed:12105218, PubMed:28165510, PubMed:9121453).</text>
</comment>
<comment type="function">
    <molecule>Isoform 3</molecule>
    <text evidence="20">Potent inhibitor of type I IFN receptor activity.</text>
</comment>
<comment type="subunit">
    <text evidence="4 9 11 13 14 16 19 20 21 24">Heterodimer with IFNAR1; forming the receptor for type I interferon (PubMed:10049744, PubMed:21854986, PubMed:24075985, PubMed:7665574, PubMed:8181059). Interacts with JAK1 (PubMed:7759950, PubMed:8181059). Interacts with the transcriptional factors STAT1 and STAT2 (PubMed:28165510, PubMed:9121453). Interacts with USP18; indirectly via STAT2, it negatively regulates the assembly of the ternary interferon-IFNAR1-IFNAR2 complex and therefore type I interferon signaling (PubMed:28165510).</text>
</comment>
<comment type="interaction">
    <interactant intactId="EBI-958408">
        <id>P48551</id>
    </interactant>
    <interactant intactId="EBI-81215">
        <id>Q92793</id>
        <label>CREBBP</label>
    </interactant>
    <organismsDiffer>false</organismsDiffer>
    <experiments>4</experiments>
</comment>
<comment type="interaction">
    <interactant intactId="EBI-958408">
        <id>P48551</id>
    </interactant>
    <interactant intactId="EBI-4394394">
        <id>P01563</id>
        <label>IFNA2</label>
    </interactant>
    <organismsDiffer>false</organismsDiffer>
    <experiments>2</experiments>
</comment>
<comment type="interaction">
    <interactant intactId="EBI-958408">
        <id>P48551</id>
    </interactant>
    <interactant intactId="EBI-626526">
        <id>Q00978</id>
        <label>IRF9</label>
    </interactant>
    <organismsDiffer>false</organismsDiffer>
    <experiments>6</experiments>
</comment>
<comment type="interaction">
    <interactant intactId="EBI-958408">
        <id>P48551</id>
    </interactant>
    <interactant intactId="EBI-1383438">
        <id>P23458</id>
        <label>JAK1</label>
    </interactant>
    <organismsDiffer>false</organismsDiffer>
    <experiments>3</experiments>
</comment>
<comment type="interaction">
    <interactant intactId="EBI-958408">
        <id>P48551</id>
    </interactant>
    <interactant intactId="EBI-724897">
        <id>O00151</id>
        <label>PDLIM1</label>
    </interactant>
    <organismsDiffer>false</organismsDiffer>
    <experiments>2</experiments>
</comment>
<comment type="interaction">
    <interactant intactId="EBI-958408">
        <id>P48551</id>
    </interactant>
    <interactant intactId="EBI-296739">
        <id>P63244</id>
        <label>RACK1</label>
    </interactant>
    <organismsDiffer>false</organismsDiffer>
    <experiments>4</experiments>
</comment>
<comment type="interaction">
    <interactant intactId="EBI-958408">
        <id>P48551</id>
    </interactant>
    <interactant intactId="EBI-1057697">
        <id>P42224</id>
        <label>STAT1</label>
    </interactant>
    <organismsDiffer>false</organismsDiffer>
    <experiments>2</experiments>
</comment>
<comment type="interaction">
    <interactant intactId="EBI-958408">
        <id>P48551</id>
    </interactant>
    <interactant intactId="EBI-1546963">
        <id>P52630</id>
        <label>STAT2</label>
    </interactant>
    <organismsDiffer>false</organismsDiffer>
    <experiments>4</experiments>
</comment>
<comment type="interaction">
    <interactant intactId="EBI-958408">
        <id>P48551</id>
    </interactant>
    <interactant intactId="EBI-356206">
        <id>Q9UMW8</id>
        <label>USP18</label>
    </interactant>
    <organismsDiffer>false</organismsDiffer>
    <experiments>4</experiments>
</comment>
<comment type="subcellular location">
    <molecule>Isoform 1</molecule>
    <subcellularLocation>
        <location evidence="19">Cell membrane</location>
        <topology evidence="19">Single-pass type I membrane protein</topology>
    </subcellularLocation>
</comment>
<comment type="subcellular location">
    <molecule>Isoform 2</molecule>
    <subcellularLocation>
        <location evidence="19 20 21">Cell membrane</location>
        <topology evidence="19">Single-pass type I membrane protein</topology>
    </subcellularLocation>
</comment>
<comment type="subcellular location">
    <molecule>Isoform 3</molecule>
    <subcellularLocation>
        <location evidence="20 21">Secreted</location>
    </subcellularLocation>
</comment>
<comment type="alternative products">
    <event type="alternative splicing"/>
    <isoform>
        <id>P48551-1</id>
        <name>1</name>
        <name evidence="28">Long form beta</name>
        <name>IFNaR2-2</name>
        <name>IFNaR2-1b</name>
        <sequence type="displayed"/>
    </isoform>
    <isoform>
        <id>P48551-2</id>
        <name>2</name>
        <name evidence="28">Short form beta</name>
        <name>IFNaR2-1</name>
        <name>IFNaR2-1a</name>
        <sequence type="described" ref="VSP_001738 VSP_001739"/>
    </isoform>
    <isoform>
        <id>P48551-3</id>
        <name>3</name>
        <name>IFNaR2-3</name>
        <name>IFNaR2-2a</name>
        <name evidence="30">P40</name>
        <sequence type="described" ref="VSP_001736 VSP_001737"/>
    </isoform>
</comment>
<comment type="tissue specificity">
    <text evidence="18 20 21">Isoform 3 is detected in the urine (at protein level) (PubMed:7759950, PubMed:8181059). Expressed in blood cells. Expressed in lymphoblastoid and fibrosarcoma cell lines.</text>
</comment>
<comment type="PTM">
    <text evidence="6 7 20">Phosphorylated on tyrosine residues upon interferon binding. Phosphorylation at Tyr-337 or Tyr-512 are sufficient to mediate interferon dependent activation of STAT1, STAT2 and STAT3 leading to antiproliferative effects on many different cell types.</text>
</comment>
<comment type="PTM">
    <text evidence="21">Glycosylated.</text>
</comment>
<comment type="polymorphism">
    <text>Genetic variations in IFNAR2 influence susceptibility to hepatitis B virus (HBV) infection [MIM:610424].</text>
</comment>
<comment type="disease" evidence="15">
    <disease id="DI-04586">
        <name>Immunodeficiency 45</name>
        <acronym>IMD45</acronym>
        <description>An autosomal recessive disorder characterized by increased susceptibility to viral infection due to impaired antiviral immunity, resulting in infection-associated encephalopathy. Affected individuals are at risk for developing fatal encephalitis after routine measles/mumps/rubella (MMR) vaccination.</description>
        <dbReference type="MIM" id="616669"/>
    </disease>
    <text>The disease is caused by variants affecting the gene represented in this entry.</text>
</comment>
<comment type="miscellaneous">
    <molecule>Isoform 3</molecule>
    <text evidence="32">Soluble receptor.</text>
</comment>
<comment type="similarity">
    <text evidence="32">Belongs to the type II cytokine receptor family.</text>
</comment>
<name>INAR2_HUMAN</name>
<sequence>MLLSQNAFIFRSLNLVLMVYISLVFGISYDSPDYTDESCTFKISLRNFRSILSWELKNHSIVPTHYTLLYTIMSKPEDLKVVKNCANTTRSFCDLTDEWRSTHEAYVTVLEGFSGNTTLFSCSHNFWLAIDMSFEPPEFEIVGFTNHINVMVKFPSIVEEELQFDLSLVIEEQSEGIVKKHKPEIKGNMSGNFTYIIDKLIPNTNYCVSVYLEHSDEQAVIKSPLKCTLLPPGQESESAESAKIGGIITVFLIALVLTSTIVTLKWIGYICLRNSLPKVLNFHNFLAWPFPNLPPLEAMDMVEVIYINRKKKVWDYNYDDESDSDTEAAPRTSGGGYTMHGLTVRPLGQASATSTESQLIDPESEEEPDLPEVDVELPTMPKDSPQQLELLSGPCERRKSPLQDPFPEEDYSSTEGSGGRITFNVDLNSVFLRVLDDEDSDDLEAPLMLSSHLEEMVDPEDPDNVQSNHLLASGEGTQPTFPSPSSEGLWSEDAPSDQSDTSESDVDLGDGYIMR</sequence>